<keyword id="KW-0025">Alternative splicing</keyword>
<keyword id="KW-0175">Coiled coil</keyword>
<keyword id="KW-0963">Cytoplasm</keyword>
<keyword id="KW-0539">Nucleus</keyword>
<keyword id="KW-1185">Reference proteome</keyword>
<protein>
    <recommendedName>
        <fullName>MORF4 family-associated protein 1</fullName>
    </recommendedName>
    <alternativeName>
        <fullName>T-cell activation protein-related protein</fullName>
    </alternativeName>
</protein>
<comment type="subunit">
    <text evidence="1 4">Found in a complex composed of MORF4L1, MRFAP1 and RB1. Interacts via its N-terminus with MORF4L1. Interacts with CSTB and MORF4L2.</text>
</comment>
<comment type="subcellular location">
    <subcellularLocation>
        <location evidence="1">Nucleus</location>
    </subcellularLocation>
    <subcellularLocation>
        <location evidence="1">Cytoplasm</location>
        <location evidence="1">Perinuclear region</location>
    </subcellularLocation>
    <text evidence="1">Colocalizes with MORF4L1 to cell nuclei.</text>
</comment>
<comment type="alternative products">
    <event type="alternative splicing"/>
    <isoform>
        <id>Q5M820-1</id>
        <name evidence="5">1</name>
        <sequence type="displayed"/>
    </isoform>
    <isoform>
        <id>Q5M820-2</id>
        <name evidence="4">2</name>
        <sequence type="described" ref="VSP_052549"/>
    </isoform>
</comment>
<comment type="similarity">
    <text evidence="7">Belongs to the MORF4 family-associated protein family.</text>
</comment>
<comment type="sequence caution" evidence="7">
    <conflict type="erroneous initiation">
        <sequence resource="EMBL-CDS" id="AAN03958"/>
    </conflict>
</comment>
<evidence type="ECO:0000250" key="1">
    <source>
        <dbReference type="UniProtKB" id="Q9Y605"/>
    </source>
</evidence>
<evidence type="ECO:0000255" key="2"/>
<evidence type="ECO:0000256" key="3">
    <source>
        <dbReference type="SAM" id="MobiDB-lite"/>
    </source>
</evidence>
<evidence type="ECO:0000269" key="4">
    <source>
    </source>
</evidence>
<evidence type="ECO:0000269" key="5">
    <source>
    </source>
</evidence>
<evidence type="ECO:0000303" key="6">
    <source>
    </source>
</evidence>
<evidence type="ECO:0000305" key="7"/>
<evidence type="ECO:0000312" key="8">
    <source>
        <dbReference type="EMBL" id="AAH88308.1"/>
    </source>
</evidence>
<evidence type="ECO:0000312" key="9">
    <source>
        <dbReference type="EMBL" id="AAN03958.1"/>
    </source>
</evidence>
<evidence type="ECO:0000312" key="10">
    <source>
        <dbReference type="RGD" id="628631"/>
    </source>
</evidence>
<feature type="chain" id="PRO_0000306179" description="MORF4 family-associated protein 1">
    <location>
        <begin position="1"/>
        <end position="125"/>
    </location>
</feature>
<feature type="region of interest" description="Disordered" evidence="3">
    <location>
        <begin position="76"/>
        <end position="99"/>
    </location>
</feature>
<feature type="coiled-coil region" evidence="2">
    <location>
        <begin position="94"/>
        <end position="124"/>
    </location>
</feature>
<feature type="splice variant" id="VSP_052549" description="In isoform 2." evidence="6">
    <location>
        <begin position="18"/>
        <end position="41"/>
    </location>
</feature>
<name>MOFA1_RAT</name>
<reference evidence="7 9" key="1">
    <citation type="journal article" date="2002" name="Hum. Mol. Genet.">
        <title>New insights into the molecular basis of progressive myoclonus epilepsy: a multiprotein complex with cystatin B.</title>
        <authorList>
            <person name="Di Giaimo R."/>
            <person name="Riccio M."/>
            <person name="Santi S."/>
            <person name="Galeotti C."/>
            <person name="Ambrosetti D.C."/>
            <person name="Melli M."/>
        </authorList>
    </citation>
    <scope>NUCLEOTIDE SEQUENCE [MRNA] (ISOFORM 2)</scope>
    <scope>INTERACTION WITH CSTB</scope>
    <source>
        <strain evidence="9">Sprague-Dawley</strain>
        <tissue evidence="9">Cerebellum</tissue>
    </source>
</reference>
<reference evidence="7 8" key="2">
    <citation type="journal article" date="2004" name="Genome Res.">
        <title>The status, quality, and expansion of the NIH full-length cDNA project: the Mammalian Gene Collection (MGC).</title>
        <authorList>
            <consortium name="The MGC Project Team"/>
        </authorList>
    </citation>
    <scope>NUCLEOTIDE SEQUENCE [LARGE SCALE MRNA] (ISOFORM 1)</scope>
    <source>
        <tissue evidence="8">Liver</tissue>
    </source>
</reference>
<organism>
    <name type="scientific">Rattus norvegicus</name>
    <name type="common">Rat</name>
    <dbReference type="NCBI Taxonomy" id="10116"/>
    <lineage>
        <taxon>Eukaryota</taxon>
        <taxon>Metazoa</taxon>
        <taxon>Chordata</taxon>
        <taxon>Craniata</taxon>
        <taxon>Vertebrata</taxon>
        <taxon>Euteleostomi</taxon>
        <taxon>Mammalia</taxon>
        <taxon>Eutheria</taxon>
        <taxon>Euarchontoglires</taxon>
        <taxon>Glires</taxon>
        <taxon>Rodentia</taxon>
        <taxon>Myomorpha</taxon>
        <taxon>Muroidea</taxon>
        <taxon>Muridae</taxon>
        <taxon>Murinae</taxon>
        <taxon>Rattus</taxon>
    </lineage>
</organism>
<proteinExistence type="evidence at protein level"/>
<sequence length="125" mass="14222">MRPLDAVELAEPEEVEVLEPEEDFEQFLLPVIHEMREDIASLTRERGRAPVRNRGKLWEMDNMLIQIKTQVEASEESALNHLQGAGGAEPRGPRAEKADEKAQEMAKMAEMLVQLVRRIEKSESS</sequence>
<gene>
    <name evidence="10" type="primary">Mrfap1</name>
    <name evidence="10" type="synonym">Pgr1</name>
</gene>
<accession>Q5M820</accession>
<accession>Q8K3W6</accession>
<dbReference type="EMBL" id="AF526268">
    <property type="protein sequence ID" value="AAN03958.1"/>
    <property type="status" value="ALT_INIT"/>
    <property type="molecule type" value="mRNA"/>
</dbReference>
<dbReference type="EMBL" id="BC088308">
    <property type="protein sequence ID" value="AAH88308.1"/>
    <property type="molecule type" value="mRNA"/>
</dbReference>
<dbReference type="RefSeq" id="NP_001009264.1">
    <molecule id="Q5M820-1"/>
    <property type="nucleotide sequence ID" value="NM_001009264.2"/>
</dbReference>
<dbReference type="SMR" id="Q5M820"/>
<dbReference type="FunCoup" id="Q5M820">
    <property type="interactions" value="616"/>
</dbReference>
<dbReference type="STRING" id="10116.ENSRNOP00000071505"/>
<dbReference type="PhosphoSitePlus" id="Q5M820"/>
<dbReference type="jPOST" id="Q5M820"/>
<dbReference type="PaxDb" id="10116-ENSRNOP00000008121"/>
<dbReference type="GeneID" id="282585"/>
<dbReference type="KEGG" id="rno:282585"/>
<dbReference type="AGR" id="RGD:628631"/>
<dbReference type="CTD" id="93621"/>
<dbReference type="RGD" id="628631">
    <property type="gene designation" value="Mrfap1"/>
</dbReference>
<dbReference type="VEuPathDB" id="HostDB:ENSRNOG00000056162"/>
<dbReference type="eggNOG" id="ENOG502RU25">
    <property type="taxonomic scope" value="Eukaryota"/>
</dbReference>
<dbReference type="HOGENOM" id="CLU_166966_1_0_1"/>
<dbReference type="InParanoid" id="Q5M820"/>
<dbReference type="OrthoDB" id="90523at9989"/>
<dbReference type="PRO" id="PR:Q5M820"/>
<dbReference type="Proteomes" id="UP000002494">
    <property type="component" value="Chromosome 14"/>
</dbReference>
<dbReference type="Bgee" id="ENSRNOG00000055319">
    <property type="expression patterns" value="Expressed in cerebellum and 19 other cell types or tissues"/>
</dbReference>
<dbReference type="GO" id="GO:0005634">
    <property type="term" value="C:nucleus"/>
    <property type="evidence" value="ECO:0007669"/>
    <property type="project" value="UniProtKB-SubCell"/>
</dbReference>
<dbReference type="GO" id="GO:0048471">
    <property type="term" value="C:perinuclear region of cytoplasm"/>
    <property type="evidence" value="ECO:0007669"/>
    <property type="project" value="UniProtKB-SubCell"/>
</dbReference>
<dbReference type="InterPro" id="IPR029254">
    <property type="entry name" value="MRFAP1"/>
</dbReference>
<dbReference type="PANTHER" id="PTHR31324:SF1">
    <property type="entry name" value="MORF4 FAMILY-ASSOCIATED PROTEIN 1"/>
    <property type="match status" value="1"/>
</dbReference>
<dbReference type="PANTHER" id="PTHR31324">
    <property type="entry name" value="MORF4 FAMILY-ASSOCIATED PROTEIN 1-RELATED"/>
    <property type="match status" value="1"/>
</dbReference>
<dbReference type="Pfam" id="PF15155">
    <property type="entry name" value="MRFAP1"/>
    <property type="match status" value="1"/>
</dbReference>